<reference key="1">
    <citation type="journal article" date="2004" name="Proc. Natl. Acad. Sci. U.S.A.">
        <title>Genomic analysis of Bacteroides fragilis reveals extensive DNA inversions regulating cell surface adaptation.</title>
        <authorList>
            <person name="Kuwahara T."/>
            <person name="Yamashita A."/>
            <person name="Hirakawa H."/>
            <person name="Nakayama H."/>
            <person name="Toh H."/>
            <person name="Okada N."/>
            <person name="Kuhara S."/>
            <person name="Hattori M."/>
            <person name="Hayashi T."/>
            <person name="Ohnishi Y."/>
        </authorList>
    </citation>
    <scope>NUCLEOTIDE SEQUENCE [LARGE SCALE GENOMIC DNA]</scope>
    <source>
        <strain>YCH46</strain>
    </source>
</reference>
<comment type="function">
    <text evidence="1">Catalyzes the conversion of dihydroorotate to orotate with NAD(+) as electron acceptor.</text>
</comment>
<comment type="catalytic activity">
    <reaction>
        <text>(S)-dihydroorotate + NAD(+) = orotate + NADH + H(+)</text>
        <dbReference type="Rhea" id="RHEA:13513"/>
        <dbReference type="ChEBI" id="CHEBI:15378"/>
        <dbReference type="ChEBI" id="CHEBI:30839"/>
        <dbReference type="ChEBI" id="CHEBI:30864"/>
        <dbReference type="ChEBI" id="CHEBI:57540"/>
        <dbReference type="ChEBI" id="CHEBI:57945"/>
        <dbReference type="EC" id="1.3.1.14"/>
    </reaction>
</comment>
<comment type="cofactor">
    <cofactor evidence="1">
        <name>FMN</name>
        <dbReference type="ChEBI" id="CHEBI:58210"/>
    </cofactor>
    <text evidence="1">Binds 1 FMN per subunit.</text>
</comment>
<comment type="pathway">
    <text>Pyrimidine metabolism; UMP biosynthesis via de novo pathway; orotate from (S)-dihydroorotate (NAD(+) route): step 1/1.</text>
</comment>
<comment type="subunit">
    <text evidence="1">Heterotetramer of 2 PyrK and 2 PyrD type B subunits.</text>
</comment>
<comment type="subcellular location">
    <subcellularLocation>
        <location evidence="1">Cytoplasm</location>
    </subcellularLocation>
</comment>
<comment type="similarity">
    <text evidence="2">Belongs to the dihydroorotate dehydrogenase family. Type 1 subfamily.</text>
</comment>
<dbReference type="EC" id="1.3.1.14"/>
<dbReference type="EMBL" id="AP006841">
    <property type="protein sequence ID" value="BAD49149.1"/>
    <property type="molecule type" value="Genomic_DNA"/>
</dbReference>
<dbReference type="RefSeq" id="WP_005787859.1">
    <property type="nucleotide sequence ID" value="NZ_UYXF01000005.1"/>
</dbReference>
<dbReference type="RefSeq" id="YP_099683.1">
    <property type="nucleotide sequence ID" value="NC_006347.1"/>
</dbReference>
<dbReference type="SMR" id="Q64TN0"/>
<dbReference type="STRING" id="295405.BF2400"/>
<dbReference type="KEGG" id="bfr:BF2400"/>
<dbReference type="PATRIC" id="fig|295405.11.peg.2319"/>
<dbReference type="HOGENOM" id="CLU_042042_0_0_10"/>
<dbReference type="OrthoDB" id="9794954at2"/>
<dbReference type="UniPathway" id="UPA00070">
    <property type="reaction ID" value="UER00945"/>
</dbReference>
<dbReference type="Proteomes" id="UP000002197">
    <property type="component" value="Chromosome"/>
</dbReference>
<dbReference type="GO" id="GO:0005737">
    <property type="term" value="C:cytoplasm"/>
    <property type="evidence" value="ECO:0007669"/>
    <property type="project" value="UniProtKB-SubCell"/>
</dbReference>
<dbReference type="GO" id="GO:0004589">
    <property type="term" value="F:dihydroorotate dehydrogenase (NAD+) activity"/>
    <property type="evidence" value="ECO:0007669"/>
    <property type="project" value="UniProtKB-EC"/>
</dbReference>
<dbReference type="GO" id="GO:0006207">
    <property type="term" value="P:'de novo' pyrimidine nucleobase biosynthetic process"/>
    <property type="evidence" value="ECO:0007669"/>
    <property type="project" value="InterPro"/>
</dbReference>
<dbReference type="GO" id="GO:0044205">
    <property type="term" value="P:'de novo' UMP biosynthetic process"/>
    <property type="evidence" value="ECO:0007669"/>
    <property type="project" value="UniProtKB-UniRule"/>
</dbReference>
<dbReference type="CDD" id="cd04740">
    <property type="entry name" value="DHOD_1B_like"/>
    <property type="match status" value="1"/>
</dbReference>
<dbReference type="FunFam" id="3.20.20.70:FF:000069">
    <property type="entry name" value="Dihydroorotate dehydrogenase"/>
    <property type="match status" value="1"/>
</dbReference>
<dbReference type="Gene3D" id="3.20.20.70">
    <property type="entry name" value="Aldolase class I"/>
    <property type="match status" value="1"/>
</dbReference>
<dbReference type="HAMAP" id="MF_00224">
    <property type="entry name" value="DHO_dh_type1"/>
    <property type="match status" value="1"/>
</dbReference>
<dbReference type="InterPro" id="IPR013785">
    <property type="entry name" value="Aldolase_TIM"/>
</dbReference>
<dbReference type="InterPro" id="IPR050074">
    <property type="entry name" value="DHO_dehydrogenase"/>
</dbReference>
<dbReference type="InterPro" id="IPR033888">
    <property type="entry name" value="DHOD_1B"/>
</dbReference>
<dbReference type="InterPro" id="IPR024920">
    <property type="entry name" value="Dihydroorotate_DH_1"/>
</dbReference>
<dbReference type="InterPro" id="IPR012135">
    <property type="entry name" value="Dihydroorotate_DH_1_2"/>
</dbReference>
<dbReference type="InterPro" id="IPR005720">
    <property type="entry name" value="Dihydroorotate_DH_cat"/>
</dbReference>
<dbReference type="InterPro" id="IPR001295">
    <property type="entry name" value="Dihydroorotate_DH_CS"/>
</dbReference>
<dbReference type="InterPro" id="IPR049622">
    <property type="entry name" value="Dihydroorotate_DH_I"/>
</dbReference>
<dbReference type="NCBIfam" id="NF005574">
    <property type="entry name" value="PRK07259.1"/>
    <property type="match status" value="1"/>
</dbReference>
<dbReference type="NCBIfam" id="TIGR01037">
    <property type="entry name" value="pyrD_sub1_fam"/>
    <property type="match status" value="1"/>
</dbReference>
<dbReference type="PANTHER" id="PTHR48109:SF1">
    <property type="entry name" value="DIHYDROOROTATE DEHYDROGENASE (FUMARATE)"/>
    <property type="match status" value="1"/>
</dbReference>
<dbReference type="PANTHER" id="PTHR48109">
    <property type="entry name" value="DIHYDROOROTATE DEHYDROGENASE (QUINONE), MITOCHONDRIAL-RELATED"/>
    <property type="match status" value="1"/>
</dbReference>
<dbReference type="Pfam" id="PF01180">
    <property type="entry name" value="DHO_dh"/>
    <property type="match status" value="1"/>
</dbReference>
<dbReference type="PIRSF" id="PIRSF000164">
    <property type="entry name" value="DHO_oxidase"/>
    <property type="match status" value="1"/>
</dbReference>
<dbReference type="SUPFAM" id="SSF51395">
    <property type="entry name" value="FMN-linked oxidoreductases"/>
    <property type="match status" value="1"/>
</dbReference>
<dbReference type="PROSITE" id="PS00911">
    <property type="entry name" value="DHODEHASE_1"/>
    <property type="match status" value="1"/>
</dbReference>
<dbReference type="PROSITE" id="PS00912">
    <property type="entry name" value="DHODEHASE_2"/>
    <property type="match status" value="1"/>
</dbReference>
<protein>
    <recommendedName>
        <fullName>Dihydroorotate dehydrogenase B (NAD(+)), catalytic subunit</fullName>
        <shortName>DHOD B</shortName>
        <shortName>DHODase B</shortName>
        <shortName>DHOdehase B</shortName>
        <ecNumber>1.3.1.14</ecNumber>
    </recommendedName>
    <alternativeName>
        <fullName>Dihydroorotate oxidase B</fullName>
    </alternativeName>
    <alternativeName>
        <fullName>Orotate reductase (NADH)</fullName>
    </alternativeName>
</protein>
<proteinExistence type="inferred from homology"/>
<organism>
    <name type="scientific">Bacteroides fragilis (strain YCH46)</name>
    <dbReference type="NCBI Taxonomy" id="295405"/>
    <lineage>
        <taxon>Bacteria</taxon>
        <taxon>Pseudomonadati</taxon>
        <taxon>Bacteroidota</taxon>
        <taxon>Bacteroidia</taxon>
        <taxon>Bacteroidales</taxon>
        <taxon>Bacteroidaceae</taxon>
        <taxon>Bacteroides</taxon>
    </lineage>
</organism>
<sequence>MADLSVNIGKLQMKNPVMTASGTFGYGEEFADFIDITRIGGIIVKGTTLHKREGNPYPRMAETPSGMLNAVGLQNKGVEYFSNHIYPRIKDIQTHMIVNVSGSAIEDYVKTAEIINELDKIPAIELNISCPNVKQGGMAFGVTTKGVSEVVQAVRSAYKKTLIVKLSPNVTDIAEMARAAEANGADSVSLINTLLGMAIDAERKRPILSTVTGGMSGAAVKPIALRMVWQVAKAVNIPVIGLGGIMNWKDAVEFMLAGASAIQIGTANFIDPAITIKVIDGINDYLERHGCKSVSEIIGALEV</sequence>
<evidence type="ECO:0000250" key="1"/>
<evidence type="ECO:0000305" key="2"/>
<feature type="chain" id="PRO_1000024128" description="Dihydroorotate dehydrogenase B (NAD(+)), catalytic subunit">
    <location>
        <begin position="1"/>
        <end position="303"/>
    </location>
</feature>
<feature type="active site" description="Nucleophile">
    <location>
        <position position="130"/>
    </location>
</feature>
<feature type="binding site" evidence="1">
    <location>
        <position position="21"/>
    </location>
    <ligand>
        <name>FMN</name>
        <dbReference type="ChEBI" id="CHEBI:58210"/>
    </ligand>
</feature>
<feature type="binding site" evidence="1">
    <location>
        <begin position="45"/>
        <end position="46"/>
    </location>
    <ligand>
        <name>FMN</name>
        <dbReference type="ChEBI" id="CHEBI:58210"/>
    </ligand>
</feature>
<feature type="binding site" evidence="1">
    <location>
        <position position="45"/>
    </location>
    <ligand>
        <name>substrate</name>
    </ligand>
</feature>
<feature type="binding site" evidence="1">
    <location>
        <begin position="69"/>
        <end position="73"/>
    </location>
    <ligand>
        <name>substrate</name>
    </ligand>
</feature>
<feature type="binding site" evidence="1">
    <location>
        <position position="99"/>
    </location>
    <ligand>
        <name>FMN</name>
        <dbReference type="ChEBI" id="CHEBI:58210"/>
    </ligand>
</feature>
<feature type="binding site" evidence="1">
    <location>
        <position position="127"/>
    </location>
    <ligand>
        <name>FMN</name>
        <dbReference type="ChEBI" id="CHEBI:58210"/>
    </ligand>
</feature>
<feature type="binding site" evidence="1">
    <location>
        <position position="127"/>
    </location>
    <ligand>
        <name>substrate</name>
    </ligand>
</feature>
<feature type="binding site" evidence="1">
    <location>
        <position position="165"/>
    </location>
    <ligand>
        <name>FMN</name>
        <dbReference type="ChEBI" id="CHEBI:58210"/>
    </ligand>
</feature>
<feature type="binding site" evidence="1">
    <location>
        <position position="191"/>
    </location>
    <ligand>
        <name>FMN</name>
        <dbReference type="ChEBI" id="CHEBI:58210"/>
    </ligand>
</feature>
<feature type="binding site" evidence="1">
    <location>
        <begin position="192"/>
        <end position="193"/>
    </location>
    <ligand>
        <name>substrate</name>
    </ligand>
</feature>
<feature type="binding site" evidence="1">
    <location>
        <position position="217"/>
    </location>
    <ligand>
        <name>FMN</name>
        <dbReference type="ChEBI" id="CHEBI:58210"/>
    </ligand>
</feature>
<feature type="binding site" evidence="1">
    <location>
        <begin position="243"/>
        <end position="244"/>
    </location>
    <ligand>
        <name>FMN</name>
        <dbReference type="ChEBI" id="CHEBI:58210"/>
    </ligand>
</feature>
<feature type="binding site" evidence="1">
    <location>
        <begin position="265"/>
        <end position="266"/>
    </location>
    <ligand>
        <name>FMN</name>
        <dbReference type="ChEBI" id="CHEBI:58210"/>
    </ligand>
</feature>
<keyword id="KW-0963">Cytoplasm</keyword>
<keyword id="KW-0285">Flavoprotein</keyword>
<keyword id="KW-0288">FMN</keyword>
<keyword id="KW-0520">NAD</keyword>
<keyword id="KW-0560">Oxidoreductase</keyword>
<keyword id="KW-0665">Pyrimidine biosynthesis</keyword>
<accession>Q64TN0</accession>
<name>PYRDB_BACFR</name>
<gene>
    <name type="primary">pyrD</name>
    <name type="ordered locus">BF2400</name>
</gene>